<dbReference type="EMBL" id="FN597015">
    <property type="status" value="NOT_ANNOTATED_CDS"/>
    <property type="molecule type" value="Genomic_DNA"/>
</dbReference>
<dbReference type="RefSeq" id="XP_002264875.1">
    <property type="nucleotide sequence ID" value="XM_002264839.3"/>
</dbReference>
<dbReference type="SMR" id="P0DKJ5"/>
<dbReference type="FunCoup" id="P0DKJ5">
    <property type="interactions" value="952"/>
</dbReference>
<dbReference type="STRING" id="29760.P0DKJ5"/>
<dbReference type="EnsemblPlants" id="Vitvi01g01719_t001">
    <property type="protein sequence ID" value="Vitvi01g01719_P001"/>
    <property type="gene ID" value="Vitvi01g01719"/>
</dbReference>
<dbReference type="Gramene" id="Vitvi01g01719_t001">
    <property type="protein sequence ID" value="Vitvi01g01719_P001"/>
    <property type="gene ID" value="Vitvi01g01719"/>
</dbReference>
<dbReference type="InParanoid" id="P0DKJ5"/>
<dbReference type="OMA" id="SIPLGMC"/>
<dbReference type="OrthoDB" id="409725at2759"/>
<dbReference type="Proteomes" id="UP000009183">
    <property type="component" value="Chromosome 1"/>
</dbReference>
<dbReference type="ExpressionAtlas" id="P0DKJ5">
    <property type="expression patterns" value="baseline and differential"/>
</dbReference>
<dbReference type="GO" id="GO:0000139">
    <property type="term" value="C:Golgi membrane"/>
    <property type="evidence" value="ECO:0007669"/>
    <property type="project" value="EnsemblPlants"/>
</dbReference>
<dbReference type="GO" id="GO:0016020">
    <property type="term" value="C:membrane"/>
    <property type="evidence" value="ECO:0000318"/>
    <property type="project" value="GO_Central"/>
</dbReference>
<dbReference type="GO" id="GO:0005886">
    <property type="term" value="C:plasma membrane"/>
    <property type="evidence" value="ECO:0007669"/>
    <property type="project" value="UniProtKB-SubCell"/>
</dbReference>
<dbReference type="GO" id="GO:0008515">
    <property type="term" value="F:sucrose transmembrane transporter activity"/>
    <property type="evidence" value="ECO:0007669"/>
    <property type="project" value="EnsemblPlants"/>
</dbReference>
<dbReference type="GO" id="GO:0051119">
    <property type="term" value="F:sugar transmembrane transporter activity"/>
    <property type="evidence" value="ECO:0000318"/>
    <property type="project" value="GO_Central"/>
</dbReference>
<dbReference type="GO" id="GO:0008643">
    <property type="term" value="P:carbohydrate transport"/>
    <property type="evidence" value="ECO:0000318"/>
    <property type="project" value="GO_Central"/>
</dbReference>
<dbReference type="GO" id="GO:0071215">
    <property type="term" value="P:cellular response to abscisic acid stimulus"/>
    <property type="evidence" value="ECO:0007669"/>
    <property type="project" value="EnsemblPlants"/>
</dbReference>
<dbReference type="GO" id="GO:0071470">
    <property type="term" value="P:cellular response to osmotic stress"/>
    <property type="evidence" value="ECO:0007669"/>
    <property type="project" value="EnsemblPlants"/>
</dbReference>
<dbReference type="GO" id="GO:0071446">
    <property type="term" value="P:cellular response to salicylic acid stimulus"/>
    <property type="evidence" value="ECO:0007669"/>
    <property type="project" value="EnsemblPlants"/>
</dbReference>
<dbReference type="GO" id="GO:0009793">
    <property type="term" value="P:embryo development ending in seed dormancy"/>
    <property type="evidence" value="ECO:0007669"/>
    <property type="project" value="EnsemblPlants"/>
</dbReference>
<dbReference type="GO" id="GO:0010150">
    <property type="term" value="P:leaf senescence"/>
    <property type="evidence" value="ECO:0007669"/>
    <property type="project" value="EnsemblPlants"/>
</dbReference>
<dbReference type="GO" id="GO:0010431">
    <property type="term" value="P:seed maturation"/>
    <property type="evidence" value="ECO:0007669"/>
    <property type="project" value="EnsemblPlants"/>
</dbReference>
<dbReference type="FunFam" id="1.20.1280.290:FF:000001">
    <property type="entry name" value="Bidirectional sugar transporter SWEET"/>
    <property type="match status" value="1"/>
</dbReference>
<dbReference type="FunFam" id="1.20.1280.290:FF:000003">
    <property type="entry name" value="Bidirectional sugar transporter SWEET"/>
    <property type="match status" value="1"/>
</dbReference>
<dbReference type="Gene3D" id="1.20.1280.290">
    <property type="match status" value="2"/>
</dbReference>
<dbReference type="InterPro" id="IPR047664">
    <property type="entry name" value="SWEET"/>
</dbReference>
<dbReference type="InterPro" id="IPR004316">
    <property type="entry name" value="SWEET_rpt"/>
</dbReference>
<dbReference type="PANTHER" id="PTHR10791:SF222">
    <property type="entry name" value="BIDIRECTIONAL SUGAR TRANSPORTER SWEET15"/>
    <property type="match status" value="1"/>
</dbReference>
<dbReference type="PANTHER" id="PTHR10791">
    <property type="entry name" value="RAG1-ACTIVATING PROTEIN 1"/>
    <property type="match status" value="1"/>
</dbReference>
<dbReference type="Pfam" id="PF03083">
    <property type="entry name" value="MtN3_slv"/>
    <property type="match status" value="2"/>
</dbReference>
<keyword id="KW-1003">Cell membrane</keyword>
<keyword id="KW-0472">Membrane</keyword>
<keyword id="KW-1185">Reference proteome</keyword>
<keyword id="KW-0677">Repeat</keyword>
<keyword id="KW-0762">Sugar transport</keyword>
<keyword id="KW-0812">Transmembrane</keyword>
<keyword id="KW-1133">Transmembrane helix</keyword>
<keyword id="KW-0813">Transport</keyword>
<accession>P0DKJ5</accession>
<protein>
    <recommendedName>
        <fullName evidence="4">Bidirectional sugar transporter SWEET15</fullName>
        <shortName evidence="4">VvSWEET15</shortName>
    </recommendedName>
</protein>
<feature type="chain" id="PRO_0000434110" description="Bidirectional sugar transporter SWEET15">
    <location>
        <begin position="1"/>
        <end position="289"/>
    </location>
</feature>
<feature type="topological domain" description="Extracellular" evidence="4">
    <location>
        <begin position="1"/>
        <end position="10"/>
    </location>
</feature>
<feature type="transmembrane region" description="Helical; Name=1" evidence="2">
    <location>
        <begin position="11"/>
        <end position="31"/>
    </location>
</feature>
<feature type="topological domain" description="Cytoplasmic" evidence="4">
    <location>
        <begin position="32"/>
        <end position="45"/>
    </location>
</feature>
<feature type="transmembrane region" description="Helical; Name=2" evidence="2">
    <location>
        <begin position="46"/>
        <end position="66"/>
    </location>
</feature>
<feature type="topological domain" description="Extracellular" evidence="4">
    <location>
        <begin position="67"/>
        <end position="70"/>
    </location>
</feature>
<feature type="transmembrane region" description="Helical; Name=3" evidence="2">
    <location>
        <begin position="71"/>
        <end position="91"/>
    </location>
</feature>
<feature type="topological domain" description="Cytoplasmic" evidence="4">
    <location>
        <begin position="92"/>
        <end position="106"/>
    </location>
</feature>
<feature type="transmembrane region" description="Helical; Name=4" evidence="2">
    <location>
        <begin position="107"/>
        <end position="127"/>
    </location>
</feature>
<feature type="topological domain" description="Extracellular" evidence="4">
    <location>
        <begin position="128"/>
        <end position="134"/>
    </location>
</feature>
<feature type="transmembrane region" description="Helical; Name=5" evidence="2">
    <location>
        <begin position="135"/>
        <end position="155"/>
    </location>
</feature>
<feature type="topological domain" description="Cytoplasmic" evidence="4">
    <location>
        <begin position="156"/>
        <end position="167"/>
    </location>
</feature>
<feature type="transmembrane region" description="Helical; Name=6" evidence="2">
    <location>
        <begin position="168"/>
        <end position="188"/>
    </location>
</feature>
<feature type="topological domain" description="Extracellular" evidence="4">
    <location>
        <begin position="189"/>
        <end position="193"/>
    </location>
</feature>
<feature type="transmembrane region" description="Helical; Name=7" evidence="2">
    <location>
        <begin position="194"/>
        <end position="214"/>
    </location>
</feature>
<feature type="topological domain" description="Cytoplasmic" evidence="4">
    <location>
        <begin position="215"/>
        <end position="289"/>
    </location>
</feature>
<feature type="domain" description="MtN3/slv 1" evidence="4">
    <location>
        <begin position="14"/>
        <end position="100"/>
    </location>
</feature>
<feature type="domain" description="MtN3/slv 2" evidence="4">
    <location>
        <begin position="136"/>
        <end position="219"/>
    </location>
</feature>
<feature type="region of interest" description="Disordered" evidence="3">
    <location>
        <begin position="249"/>
        <end position="289"/>
    </location>
</feature>
<feature type="compositionally biased region" description="Polar residues" evidence="3">
    <location>
        <begin position="277"/>
        <end position="289"/>
    </location>
</feature>
<name>SWT15_VITVI</name>
<sequence length="289" mass="32149">MAMAMANHHTLGLIFGILGNIISFLVYFAPAPTFYRIYKRKSAEGFHSLPYIVALFSAMLWLYYALLKKDAFLLITINSFGCAIESFYILLYFFYAPMQAKKQTLKVVISLNVGVFSILVVLIQFLLKGSNRINVFGWICASFSVAVFAAPLSIVAKVIRTKSVEFMPFSLSFFLTLSAIMWFAYGLLKNDPCVAIPNILGVILGLVQMVLYGFYRNAGKEKMEKKLPEHIIDMVMLSTLGTSDIHPIGAQQNGIKKSGSEDVKDDEETGNREKSTENSGELQPNGSTV</sequence>
<evidence type="ECO:0000250" key="1">
    <source>
        <dbReference type="UniProtKB" id="Q8L9J7"/>
    </source>
</evidence>
<evidence type="ECO:0000255" key="2"/>
<evidence type="ECO:0000256" key="3">
    <source>
        <dbReference type="SAM" id="MobiDB-lite"/>
    </source>
</evidence>
<evidence type="ECO:0000305" key="4"/>
<organism>
    <name type="scientific">Vitis vinifera</name>
    <name type="common">Grape</name>
    <dbReference type="NCBI Taxonomy" id="29760"/>
    <lineage>
        <taxon>Eukaryota</taxon>
        <taxon>Viridiplantae</taxon>
        <taxon>Streptophyta</taxon>
        <taxon>Embryophyta</taxon>
        <taxon>Tracheophyta</taxon>
        <taxon>Spermatophyta</taxon>
        <taxon>Magnoliopsida</taxon>
        <taxon>eudicotyledons</taxon>
        <taxon>Gunneridae</taxon>
        <taxon>Pentapetalae</taxon>
        <taxon>rosids</taxon>
        <taxon>Vitales</taxon>
        <taxon>Vitaceae</taxon>
        <taxon>Viteae</taxon>
        <taxon>Vitis</taxon>
    </lineage>
</organism>
<gene>
    <name evidence="4" type="primary">SWEET15</name>
</gene>
<comment type="function">
    <text evidence="1">Mediates both low-affinity uptake and efflux of sugar across the plasma membrane.</text>
</comment>
<comment type="subunit">
    <text evidence="1">Forms homooligomers and/or heterooligomers.</text>
</comment>
<comment type="subcellular location">
    <subcellularLocation>
        <location evidence="1">Cell membrane</location>
        <topology evidence="1">Multi-pass membrane protein</topology>
    </subcellularLocation>
</comment>
<comment type="similarity">
    <text evidence="4">Belongs to the SWEET sugar transporter family.</text>
</comment>
<reference key="1">
    <citation type="journal article" date="2007" name="Nature">
        <title>The grapevine genome sequence suggests ancestral hexaploidization in major angiosperm phyla.</title>
        <authorList>
            <person name="Jaillon O."/>
            <person name="Aury J.-M."/>
            <person name="Noel B."/>
            <person name="Policriti A."/>
            <person name="Clepet C."/>
            <person name="Casagrande A."/>
            <person name="Choisne N."/>
            <person name="Aubourg S."/>
            <person name="Vitulo N."/>
            <person name="Jubin C."/>
            <person name="Vezzi A."/>
            <person name="Legeai F."/>
            <person name="Hugueney P."/>
            <person name="Dasilva C."/>
            <person name="Horner D."/>
            <person name="Mica E."/>
            <person name="Jublot D."/>
            <person name="Poulain J."/>
            <person name="Bruyere C."/>
            <person name="Billault A."/>
            <person name="Segurens B."/>
            <person name="Gouyvenoux M."/>
            <person name="Ugarte E."/>
            <person name="Cattonaro F."/>
            <person name="Anthouard V."/>
            <person name="Vico V."/>
            <person name="Del Fabbro C."/>
            <person name="Alaux M."/>
            <person name="Di Gaspero G."/>
            <person name="Dumas V."/>
            <person name="Felice N."/>
            <person name="Paillard S."/>
            <person name="Juman I."/>
            <person name="Moroldo M."/>
            <person name="Scalabrin S."/>
            <person name="Canaguier A."/>
            <person name="Le Clainche I."/>
            <person name="Malacrida G."/>
            <person name="Durand E."/>
            <person name="Pesole G."/>
            <person name="Laucou V."/>
            <person name="Chatelet P."/>
            <person name="Merdinoglu D."/>
            <person name="Delledonne M."/>
            <person name="Pezzotti M."/>
            <person name="Lecharny A."/>
            <person name="Scarpelli C."/>
            <person name="Artiguenave F."/>
            <person name="Pe M.E."/>
            <person name="Valle G."/>
            <person name="Morgante M."/>
            <person name="Caboche M."/>
            <person name="Adam-Blondon A.-F."/>
            <person name="Weissenbach J."/>
            <person name="Quetier F."/>
            <person name="Wincker P."/>
        </authorList>
    </citation>
    <scope>NUCLEOTIDE SEQUENCE [LARGE SCALE GENOMIC DNA]</scope>
    <source>
        <strain>cv. Pinot noir / PN40024</strain>
    </source>
</reference>
<proteinExistence type="inferred from homology"/>